<feature type="chain" id="PRO_0000298114" description="Cell division topological specificity factor">
    <location>
        <begin position="1"/>
        <end position="90"/>
    </location>
</feature>
<name>MINE_FRATH</name>
<organism>
    <name type="scientific">Francisella tularensis subsp. holarctica (strain LVS)</name>
    <dbReference type="NCBI Taxonomy" id="376619"/>
    <lineage>
        <taxon>Bacteria</taxon>
        <taxon>Pseudomonadati</taxon>
        <taxon>Pseudomonadota</taxon>
        <taxon>Gammaproteobacteria</taxon>
        <taxon>Thiotrichales</taxon>
        <taxon>Francisellaceae</taxon>
        <taxon>Francisella</taxon>
    </lineage>
</organism>
<proteinExistence type="inferred from homology"/>
<comment type="function">
    <text evidence="1">Prevents the cell division inhibition by proteins MinC and MinD at internal division sites while permitting inhibition at polar sites. This ensures cell division at the proper site by restricting the formation of a division septum at the midpoint of the long axis of the cell.</text>
</comment>
<comment type="similarity">
    <text evidence="1">Belongs to the MinE family.</text>
</comment>
<keyword id="KW-0131">Cell cycle</keyword>
<keyword id="KW-0132">Cell division</keyword>
<keyword id="KW-1185">Reference proteome</keyword>
<sequence>MLAKLFGLSKKQQSASVAKERLQIIVAHQRSELHPRSSKISSHLLAELKDEIIEVVKKYVALSEENIRDIDLKVEDSSKNSTIEVNIPFN</sequence>
<accession>Q2A4R5</accession>
<gene>
    <name evidence="1" type="primary">minE</name>
    <name type="ordered locus">FTL_0518</name>
</gene>
<evidence type="ECO:0000255" key="1">
    <source>
        <dbReference type="HAMAP-Rule" id="MF_00262"/>
    </source>
</evidence>
<protein>
    <recommendedName>
        <fullName evidence="1">Cell division topological specificity factor</fullName>
    </recommendedName>
</protein>
<dbReference type="EMBL" id="AM233362">
    <property type="protein sequence ID" value="CAJ78958.1"/>
    <property type="molecule type" value="Genomic_DNA"/>
</dbReference>
<dbReference type="RefSeq" id="WP_003014812.1">
    <property type="nucleotide sequence ID" value="NZ_CP009694.1"/>
</dbReference>
<dbReference type="GeneID" id="75264169"/>
<dbReference type="KEGG" id="ftl:FTL_0518"/>
<dbReference type="Proteomes" id="UP000001944">
    <property type="component" value="Chromosome"/>
</dbReference>
<dbReference type="GO" id="GO:0051301">
    <property type="term" value="P:cell division"/>
    <property type="evidence" value="ECO:0007669"/>
    <property type="project" value="UniProtKB-KW"/>
</dbReference>
<dbReference type="GO" id="GO:0032955">
    <property type="term" value="P:regulation of division septum assembly"/>
    <property type="evidence" value="ECO:0007669"/>
    <property type="project" value="InterPro"/>
</dbReference>
<dbReference type="Gene3D" id="3.30.1070.10">
    <property type="entry name" value="Cell division topological specificity factor MinE"/>
    <property type="match status" value="1"/>
</dbReference>
<dbReference type="HAMAP" id="MF_00262">
    <property type="entry name" value="MinE"/>
    <property type="match status" value="1"/>
</dbReference>
<dbReference type="InterPro" id="IPR005527">
    <property type="entry name" value="MinE"/>
</dbReference>
<dbReference type="InterPro" id="IPR036707">
    <property type="entry name" value="MinE_sf"/>
</dbReference>
<dbReference type="NCBIfam" id="TIGR01215">
    <property type="entry name" value="minE"/>
    <property type="match status" value="1"/>
</dbReference>
<dbReference type="NCBIfam" id="NF001422">
    <property type="entry name" value="PRK00296.1"/>
    <property type="match status" value="1"/>
</dbReference>
<dbReference type="Pfam" id="PF03776">
    <property type="entry name" value="MinE"/>
    <property type="match status" value="1"/>
</dbReference>
<dbReference type="SUPFAM" id="SSF55229">
    <property type="entry name" value="Cell division protein MinE topological specificity domain"/>
    <property type="match status" value="1"/>
</dbReference>
<reference key="1">
    <citation type="submission" date="2006-03" db="EMBL/GenBank/DDBJ databases">
        <title>Complete genome sequence of Francisella tularensis LVS (Live Vaccine Strain).</title>
        <authorList>
            <person name="Chain P."/>
            <person name="Larimer F."/>
            <person name="Land M."/>
            <person name="Stilwagen S."/>
            <person name="Larsson P."/>
            <person name="Bearden S."/>
            <person name="Chu M."/>
            <person name="Oyston P."/>
            <person name="Forsman M."/>
            <person name="Andersson S."/>
            <person name="Lindler L."/>
            <person name="Titball R."/>
            <person name="Garcia E."/>
        </authorList>
    </citation>
    <scope>NUCLEOTIDE SEQUENCE [LARGE SCALE GENOMIC DNA]</scope>
    <source>
        <strain>LVS</strain>
    </source>
</reference>